<sequence length="980" mass="111020">MTTLASSYDPSSFESRLYAQWEAAGYFVPSDTGEPYTVLLPPPNVTGTLHMGHAFQQTLMDALVRYHRMRGYDTLWQVGTDHAGIATEMVVSRNLALEGKGETRDSLGREGFIAKVWEWKAASGDTIERQMRRLGTSSDWSRSTFTMDPQPSAAVNEAFVRWYEQGLIYRGQRLVNWDPVLKTAISDLEVENVEEDGFLWSIRYPLADGVTYEHIEHDADGNETLRETRDYLVVATTRPETMLGDTAVMVHPEDARYLTLHTARIVLPLTGRHVPVITDDYVDRAFGTGVVKVTPAHDFNDYQVGERHNLPLVNLFTADAKIIDPRKQYPDDESPFVNAGIDWRELDQIQRKRLGQHLAYKIPAQYIGLDRYDARKLVLSELEDLSILVETKPHKLQVPRGDRTGQVIEPYLTDQWFVKMDALAKRGLELVESGQIQFVPPNWINTYRHWMENIQDWCISRQLWWGHRIPAWFDDAGHCHVGHDEAEVRAKHGLGAEIALHQDSDVLETWFSSQLWPFSTLGWPDSQAMAERGFARYLPSSVLVTGFDIIFFWVARMIMATDSFTGQVPFRDVYITGLIRDAQGQKMSKSKGNVLDPLDIIDGISIEDLVAKRTNGLMQPRMAEKIEKATRKEFPDGIIAHGADALRFTIAALATHGRDIKFDLGRAEGYKNFCNKLWNATRFVLMNTEGARFTGVPQPRTEAEKWILARLDKVTAETHAHYANYRFDLLAQSLYEFAWNAFCDWFVELAKPALNNQDTDAAASTRHTLLYVLESLLRLLHPLTPFVTEELWQQVVPRLGITTATISLQRFPQVGDVDTSGYATAEADVEWLKSMVSALRRVRSELNVPPSKQVRLLLQADTADERPRVARFASQLSFLLKLERIDWLDAGQDTPPSAAAIVGELTLLVPLEGLVDMDAERMRLDKEIKRVKGEIGKCNGKLGNATFVQNAPAVVVDQERARLADWTTQLAGLREQRGKL</sequence>
<keyword id="KW-0030">Aminoacyl-tRNA synthetase</keyword>
<keyword id="KW-0067">ATP-binding</keyword>
<keyword id="KW-0175">Coiled coil</keyword>
<keyword id="KW-0963">Cytoplasm</keyword>
<keyword id="KW-0436">Ligase</keyword>
<keyword id="KW-0547">Nucleotide-binding</keyword>
<keyword id="KW-0648">Protein biosynthesis</keyword>
<keyword id="KW-1185">Reference proteome</keyword>
<comment type="function">
    <text evidence="1">Catalyzes the attachment of valine to tRNA(Val). As ValRS can inadvertently accommodate and process structurally similar amino acids such as threonine, to avoid such errors, it has a 'posttransfer' editing activity that hydrolyzes mischarged Thr-tRNA(Val) in a tRNA-dependent manner.</text>
</comment>
<comment type="catalytic activity">
    <reaction evidence="1">
        <text>tRNA(Val) + L-valine + ATP = L-valyl-tRNA(Val) + AMP + diphosphate</text>
        <dbReference type="Rhea" id="RHEA:10704"/>
        <dbReference type="Rhea" id="RHEA-COMP:9672"/>
        <dbReference type="Rhea" id="RHEA-COMP:9708"/>
        <dbReference type="ChEBI" id="CHEBI:30616"/>
        <dbReference type="ChEBI" id="CHEBI:33019"/>
        <dbReference type="ChEBI" id="CHEBI:57762"/>
        <dbReference type="ChEBI" id="CHEBI:78442"/>
        <dbReference type="ChEBI" id="CHEBI:78537"/>
        <dbReference type="ChEBI" id="CHEBI:456215"/>
        <dbReference type="EC" id="6.1.1.9"/>
    </reaction>
</comment>
<comment type="subunit">
    <text evidence="1">Monomer.</text>
</comment>
<comment type="subcellular location">
    <subcellularLocation>
        <location evidence="1">Cytoplasm</location>
    </subcellularLocation>
</comment>
<comment type="domain">
    <text evidence="1">ValRS has two distinct active sites: one for aminoacylation and one for editing. The misactivated threonine is translocated from the active site to the editing site.</text>
</comment>
<comment type="domain">
    <text evidence="1">The C-terminal coiled-coil domain is crucial for aminoacylation activity.</text>
</comment>
<comment type="similarity">
    <text evidence="1">Belongs to the class-I aminoacyl-tRNA synthetase family. ValS type 1 subfamily.</text>
</comment>
<dbReference type="EC" id="6.1.1.9" evidence="1"/>
<dbReference type="EMBL" id="AE013598">
    <property type="protein sequence ID" value="AAW74085.1"/>
    <property type="molecule type" value="Genomic_DNA"/>
</dbReference>
<dbReference type="SMR" id="Q5H4N5"/>
<dbReference type="STRING" id="291331.XOO0831"/>
<dbReference type="KEGG" id="xoo:XOO0831"/>
<dbReference type="PATRIC" id="fig|291331.8.peg.929"/>
<dbReference type="HOGENOM" id="CLU_001493_0_2_6"/>
<dbReference type="Proteomes" id="UP000006735">
    <property type="component" value="Chromosome"/>
</dbReference>
<dbReference type="GO" id="GO:0005829">
    <property type="term" value="C:cytosol"/>
    <property type="evidence" value="ECO:0007669"/>
    <property type="project" value="TreeGrafter"/>
</dbReference>
<dbReference type="GO" id="GO:0002161">
    <property type="term" value="F:aminoacyl-tRNA deacylase activity"/>
    <property type="evidence" value="ECO:0007669"/>
    <property type="project" value="InterPro"/>
</dbReference>
<dbReference type="GO" id="GO:0005524">
    <property type="term" value="F:ATP binding"/>
    <property type="evidence" value="ECO:0007669"/>
    <property type="project" value="UniProtKB-UniRule"/>
</dbReference>
<dbReference type="GO" id="GO:0004832">
    <property type="term" value="F:valine-tRNA ligase activity"/>
    <property type="evidence" value="ECO:0007669"/>
    <property type="project" value="UniProtKB-UniRule"/>
</dbReference>
<dbReference type="GO" id="GO:0006438">
    <property type="term" value="P:valyl-tRNA aminoacylation"/>
    <property type="evidence" value="ECO:0007669"/>
    <property type="project" value="UniProtKB-UniRule"/>
</dbReference>
<dbReference type="CDD" id="cd07962">
    <property type="entry name" value="Anticodon_Ia_Val"/>
    <property type="match status" value="1"/>
</dbReference>
<dbReference type="FunFam" id="1.10.287.380:FF:000001">
    <property type="entry name" value="Valine--tRNA ligase"/>
    <property type="match status" value="1"/>
</dbReference>
<dbReference type="FunFam" id="3.40.50.620:FF:000032">
    <property type="entry name" value="Valine--tRNA ligase"/>
    <property type="match status" value="1"/>
</dbReference>
<dbReference type="FunFam" id="3.40.50.620:FF:000098">
    <property type="entry name" value="Valine--tRNA ligase"/>
    <property type="match status" value="1"/>
</dbReference>
<dbReference type="Gene3D" id="3.40.50.620">
    <property type="entry name" value="HUPs"/>
    <property type="match status" value="2"/>
</dbReference>
<dbReference type="Gene3D" id="1.10.730.10">
    <property type="entry name" value="Isoleucyl-tRNA Synthetase, Domain 1"/>
    <property type="match status" value="1"/>
</dbReference>
<dbReference type="Gene3D" id="1.10.287.380">
    <property type="entry name" value="Valyl-tRNA synthetase, C-terminal domain"/>
    <property type="match status" value="1"/>
</dbReference>
<dbReference type="Gene3D" id="3.90.740.10">
    <property type="entry name" value="Valyl/Leucyl/Isoleucyl-tRNA synthetase, editing domain"/>
    <property type="match status" value="2"/>
</dbReference>
<dbReference type="HAMAP" id="MF_02004">
    <property type="entry name" value="Val_tRNA_synth_type1"/>
    <property type="match status" value="1"/>
</dbReference>
<dbReference type="InterPro" id="IPR001412">
    <property type="entry name" value="aa-tRNA-synth_I_CS"/>
</dbReference>
<dbReference type="InterPro" id="IPR002300">
    <property type="entry name" value="aa-tRNA-synth_Ia"/>
</dbReference>
<dbReference type="InterPro" id="IPR033705">
    <property type="entry name" value="Anticodon_Ia_Val"/>
</dbReference>
<dbReference type="InterPro" id="IPR013155">
    <property type="entry name" value="M/V/L/I-tRNA-synth_anticd-bd"/>
</dbReference>
<dbReference type="InterPro" id="IPR014729">
    <property type="entry name" value="Rossmann-like_a/b/a_fold"/>
</dbReference>
<dbReference type="InterPro" id="IPR010978">
    <property type="entry name" value="tRNA-bd_arm"/>
</dbReference>
<dbReference type="InterPro" id="IPR009080">
    <property type="entry name" value="tRNAsynth_Ia_anticodon-bd"/>
</dbReference>
<dbReference type="InterPro" id="IPR037118">
    <property type="entry name" value="Val-tRNA_synth_C_sf"/>
</dbReference>
<dbReference type="InterPro" id="IPR019499">
    <property type="entry name" value="Val-tRNA_synth_tRNA-bd"/>
</dbReference>
<dbReference type="InterPro" id="IPR009008">
    <property type="entry name" value="Val/Leu/Ile-tRNA-synth_edit"/>
</dbReference>
<dbReference type="InterPro" id="IPR002303">
    <property type="entry name" value="Valyl-tRNA_ligase"/>
</dbReference>
<dbReference type="NCBIfam" id="NF004349">
    <property type="entry name" value="PRK05729.1"/>
    <property type="match status" value="1"/>
</dbReference>
<dbReference type="NCBIfam" id="TIGR00422">
    <property type="entry name" value="valS"/>
    <property type="match status" value="1"/>
</dbReference>
<dbReference type="PANTHER" id="PTHR11946:SF93">
    <property type="entry name" value="VALINE--TRNA LIGASE, CHLOROPLASTIC_MITOCHONDRIAL 2"/>
    <property type="match status" value="1"/>
</dbReference>
<dbReference type="PANTHER" id="PTHR11946">
    <property type="entry name" value="VALYL-TRNA SYNTHETASES"/>
    <property type="match status" value="1"/>
</dbReference>
<dbReference type="Pfam" id="PF08264">
    <property type="entry name" value="Anticodon_1"/>
    <property type="match status" value="1"/>
</dbReference>
<dbReference type="Pfam" id="PF00133">
    <property type="entry name" value="tRNA-synt_1"/>
    <property type="match status" value="1"/>
</dbReference>
<dbReference type="Pfam" id="PF10458">
    <property type="entry name" value="Val_tRNA-synt_C"/>
    <property type="match status" value="1"/>
</dbReference>
<dbReference type="PRINTS" id="PR00986">
    <property type="entry name" value="TRNASYNTHVAL"/>
</dbReference>
<dbReference type="SUPFAM" id="SSF47323">
    <property type="entry name" value="Anticodon-binding domain of a subclass of class I aminoacyl-tRNA synthetases"/>
    <property type="match status" value="1"/>
</dbReference>
<dbReference type="SUPFAM" id="SSF52374">
    <property type="entry name" value="Nucleotidylyl transferase"/>
    <property type="match status" value="1"/>
</dbReference>
<dbReference type="SUPFAM" id="SSF46589">
    <property type="entry name" value="tRNA-binding arm"/>
    <property type="match status" value="1"/>
</dbReference>
<dbReference type="SUPFAM" id="SSF50677">
    <property type="entry name" value="ValRS/IleRS/LeuRS editing domain"/>
    <property type="match status" value="1"/>
</dbReference>
<dbReference type="PROSITE" id="PS00178">
    <property type="entry name" value="AA_TRNA_LIGASE_I"/>
    <property type="match status" value="1"/>
</dbReference>
<feature type="chain" id="PRO_0000224602" description="Valine--tRNA ligase">
    <location>
        <begin position="1"/>
        <end position="980"/>
    </location>
</feature>
<feature type="coiled-coil region" evidence="1">
    <location>
        <begin position="914"/>
        <end position="980"/>
    </location>
</feature>
<feature type="short sequence motif" description="'HIGH' region">
    <location>
        <begin position="43"/>
        <end position="53"/>
    </location>
</feature>
<feature type="short sequence motif" description="'KMSKS' region">
    <location>
        <begin position="586"/>
        <end position="590"/>
    </location>
</feature>
<feature type="binding site" evidence="1">
    <location>
        <position position="589"/>
    </location>
    <ligand>
        <name>ATP</name>
        <dbReference type="ChEBI" id="CHEBI:30616"/>
    </ligand>
</feature>
<gene>
    <name evidence="1" type="primary">valS</name>
    <name type="ordered locus">XOO0831</name>
</gene>
<evidence type="ECO:0000255" key="1">
    <source>
        <dbReference type="HAMAP-Rule" id="MF_02004"/>
    </source>
</evidence>
<protein>
    <recommendedName>
        <fullName evidence="1">Valine--tRNA ligase</fullName>
        <ecNumber evidence="1">6.1.1.9</ecNumber>
    </recommendedName>
    <alternativeName>
        <fullName evidence="1">Valyl-tRNA synthetase</fullName>
        <shortName evidence="1">ValRS</shortName>
    </alternativeName>
</protein>
<accession>Q5H4N5</accession>
<organism>
    <name type="scientific">Xanthomonas oryzae pv. oryzae (strain KACC10331 / KXO85)</name>
    <dbReference type="NCBI Taxonomy" id="291331"/>
    <lineage>
        <taxon>Bacteria</taxon>
        <taxon>Pseudomonadati</taxon>
        <taxon>Pseudomonadota</taxon>
        <taxon>Gammaproteobacteria</taxon>
        <taxon>Lysobacterales</taxon>
        <taxon>Lysobacteraceae</taxon>
        <taxon>Xanthomonas</taxon>
    </lineage>
</organism>
<reference key="1">
    <citation type="journal article" date="2005" name="Nucleic Acids Res.">
        <title>The genome sequence of Xanthomonas oryzae pathovar oryzae KACC10331, the bacterial blight pathogen of rice.</title>
        <authorList>
            <person name="Lee B.-M."/>
            <person name="Park Y.-J."/>
            <person name="Park D.-S."/>
            <person name="Kang H.-W."/>
            <person name="Kim J.-G."/>
            <person name="Song E.-S."/>
            <person name="Park I.-C."/>
            <person name="Yoon U.-H."/>
            <person name="Hahn J.-H."/>
            <person name="Koo B.-S."/>
            <person name="Lee G.-B."/>
            <person name="Kim H."/>
            <person name="Park H.-S."/>
            <person name="Yoon K.-O."/>
            <person name="Kim J.-H."/>
            <person name="Jung C.-H."/>
            <person name="Koh N.-H."/>
            <person name="Seo J.-S."/>
            <person name="Go S.-J."/>
        </authorList>
    </citation>
    <scope>NUCLEOTIDE SEQUENCE [LARGE SCALE GENOMIC DNA]</scope>
    <source>
        <strain>KACC10331 / KXO85</strain>
    </source>
</reference>
<name>SYV_XANOR</name>
<proteinExistence type="inferred from homology"/>